<protein>
    <recommendedName>
        <fullName evidence="1">Cell division topological specificity factor</fullName>
    </recommendedName>
</protein>
<accession>A1S6Y1</accession>
<feature type="chain" id="PRO_0000298180" description="Cell division topological specificity factor">
    <location>
        <begin position="1"/>
        <end position="85"/>
    </location>
</feature>
<comment type="function">
    <text evidence="1">Prevents the cell division inhibition by proteins MinC and MinD at internal division sites while permitting inhibition at polar sites. This ensures cell division at the proper site by restricting the formation of a division septum at the midpoint of the long axis of the cell.</text>
</comment>
<comment type="similarity">
    <text evidence="1">Belongs to the MinE family.</text>
</comment>
<proteinExistence type="inferred from homology"/>
<organism>
    <name type="scientific">Shewanella amazonensis (strain ATCC BAA-1098 / SB2B)</name>
    <dbReference type="NCBI Taxonomy" id="326297"/>
    <lineage>
        <taxon>Bacteria</taxon>
        <taxon>Pseudomonadati</taxon>
        <taxon>Pseudomonadota</taxon>
        <taxon>Gammaproteobacteria</taxon>
        <taxon>Alteromonadales</taxon>
        <taxon>Shewanellaceae</taxon>
        <taxon>Shewanella</taxon>
    </lineage>
</organism>
<evidence type="ECO:0000255" key="1">
    <source>
        <dbReference type="HAMAP-Rule" id="MF_00262"/>
    </source>
</evidence>
<sequence>MSLLDYFRSNKKASSASLAKERLQIIVAHQRTERGAPDYFPQMKQEIIEVIRKYVYISEEQVSVQLEQNDDNLSVLELNVTLPER</sequence>
<keyword id="KW-0131">Cell cycle</keyword>
<keyword id="KW-0132">Cell division</keyword>
<keyword id="KW-1185">Reference proteome</keyword>
<reference key="1">
    <citation type="submission" date="2006-12" db="EMBL/GenBank/DDBJ databases">
        <title>Complete sequence of Shewanella amazonensis SB2B.</title>
        <authorList>
            <consortium name="US DOE Joint Genome Institute"/>
            <person name="Copeland A."/>
            <person name="Lucas S."/>
            <person name="Lapidus A."/>
            <person name="Barry K."/>
            <person name="Detter J.C."/>
            <person name="Glavina del Rio T."/>
            <person name="Hammon N."/>
            <person name="Israni S."/>
            <person name="Dalin E."/>
            <person name="Tice H."/>
            <person name="Pitluck S."/>
            <person name="Munk A.C."/>
            <person name="Brettin T."/>
            <person name="Bruce D."/>
            <person name="Han C."/>
            <person name="Tapia R."/>
            <person name="Gilna P."/>
            <person name="Schmutz J."/>
            <person name="Larimer F."/>
            <person name="Land M."/>
            <person name="Hauser L."/>
            <person name="Kyrpides N."/>
            <person name="Mikhailova N."/>
            <person name="Fredrickson J."/>
            <person name="Richardson P."/>
        </authorList>
    </citation>
    <scope>NUCLEOTIDE SEQUENCE [LARGE SCALE GENOMIC DNA]</scope>
    <source>
        <strain>ATCC BAA-1098 / SB2B</strain>
    </source>
</reference>
<name>MINE_SHEAM</name>
<gene>
    <name evidence="1" type="primary">minE</name>
    <name type="ordered locus">Sama_1932</name>
</gene>
<dbReference type="EMBL" id="CP000507">
    <property type="protein sequence ID" value="ABM00138.1"/>
    <property type="molecule type" value="Genomic_DNA"/>
</dbReference>
<dbReference type="RefSeq" id="WP_011760045.1">
    <property type="nucleotide sequence ID" value="NC_008700.1"/>
</dbReference>
<dbReference type="SMR" id="A1S6Y1"/>
<dbReference type="STRING" id="326297.Sama_1932"/>
<dbReference type="KEGG" id="saz:Sama_1932"/>
<dbReference type="eggNOG" id="COG0851">
    <property type="taxonomic scope" value="Bacteria"/>
</dbReference>
<dbReference type="HOGENOM" id="CLU_137929_2_2_6"/>
<dbReference type="OrthoDB" id="9802655at2"/>
<dbReference type="Proteomes" id="UP000009175">
    <property type="component" value="Chromosome"/>
</dbReference>
<dbReference type="GO" id="GO:0051301">
    <property type="term" value="P:cell division"/>
    <property type="evidence" value="ECO:0007669"/>
    <property type="project" value="UniProtKB-KW"/>
</dbReference>
<dbReference type="GO" id="GO:0032955">
    <property type="term" value="P:regulation of division septum assembly"/>
    <property type="evidence" value="ECO:0007669"/>
    <property type="project" value="InterPro"/>
</dbReference>
<dbReference type="FunFam" id="3.30.1070.10:FF:000001">
    <property type="entry name" value="Cell division topological specificity factor"/>
    <property type="match status" value="1"/>
</dbReference>
<dbReference type="Gene3D" id="3.30.1070.10">
    <property type="entry name" value="Cell division topological specificity factor MinE"/>
    <property type="match status" value="1"/>
</dbReference>
<dbReference type="HAMAP" id="MF_00262">
    <property type="entry name" value="MinE"/>
    <property type="match status" value="1"/>
</dbReference>
<dbReference type="InterPro" id="IPR005527">
    <property type="entry name" value="MinE"/>
</dbReference>
<dbReference type="InterPro" id="IPR036707">
    <property type="entry name" value="MinE_sf"/>
</dbReference>
<dbReference type="NCBIfam" id="TIGR01215">
    <property type="entry name" value="minE"/>
    <property type="match status" value="1"/>
</dbReference>
<dbReference type="NCBIfam" id="NF001422">
    <property type="entry name" value="PRK00296.1"/>
    <property type="match status" value="1"/>
</dbReference>
<dbReference type="Pfam" id="PF03776">
    <property type="entry name" value="MinE"/>
    <property type="match status" value="1"/>
</dbReference>
<dbReference type="SUPFAM" id="SSF55229">
    <property type="entry name" value="Cell division protein MinE topological specificity domain"/>
    <property type="match status" value="1"/>
</dbReference>